<reference key="1">
    <citation type="submission" date="2004-11" db="EMBL/GenBank/DDBJ databases">
        <authorList>
            <consortium name="The German cDNA consortium"/>
        </authorList>
    </citation>
    <scope>NUCLEOTIDE SEQUENCE [LARGE SCALE MRNA]</scope>
    <source>
        <tissue>Heart</tissue>
    </source>
</reference>
<dbReference type="EMBL" id="CR858443">
    <property type="protein sequence ID" value="CAH90672.1"/>
    <property type="molecule type" value="mRNA"/>
</dbReference>
<dbReference type="RefSeq" id="NP_001125365.1">
    <property type="nucleotide sequence ID" value="NM_001131893.2"/>
</dbReference>
<dbReference type="SMR" id="Q5RC38"/>
<dbReference type="FunCoup" id="Q5RC38">
    <property type="interactions" value="219"/>
</dbReference>
<dbReference type="STRING" id="9601.ENSPPYP00000008704"/>
<dbReference type="Ensembl" id="ENSPPYT00000051446.1">
    <property type="protein sequence ID" value="ENSPPYP00000031068.1"/>
    <property type="gene ID" value="ENSPPYG00000029934.1"/>
</dbReference>
<dbReference type="GeneID" id="100172268"/>
<dbReference type="KEGG" id="pon:100172268"/>
<dbReference type="CTD" id="1339"/>
<dbReference type="eggNOG" id="KOG3469">
    <property type="taxonomic scope" value="Eukaryota"/>
</dbReference>
<dbReference type="GeneTree" id="ENSGT00940000162257"/>
<dbReference type="HOGENOM" id="CLU_122515_1_1_1"/>
<dbReference type="InParanoid" id="Q5RC38"/>
<dbReference type="OMA" id="EPFAKYE"/>
<dbReference type="OrthoDB" id="5947505at2759"/>
<dbReference type="TreeFam" id="TF105064"/>
<dbReference type="UniPathway" id="UPA00705"/>
<dbReference type="Proteomes" id="UP000001595">
    <property type="component" value="Chromosome 16"/>
</dbReference>
<dbReference type="GO" id="GO:0005743">
    <property type="term" value="C:mitochondrial inner membrane"/>
    <property type="evidence" value="ECO:0007669"/>
    <property type="project" value="UniProtKB-SubCell"/>
</dbReference>
<dbReference type="GO" id="GO:0030234">
    <property type="term" value="F:enzyme regulator activity"/>
    <property type="evidence" value="ECO:0007669"/>
    <property type="project" value="TreeGrafter"/>
</dbReference>
<dbReference type="GO" id="GO:0016491">
    <property type="term" value="F:oxidoreductase activity"/>
    <property type="evidence" value="ECO:0007669"/>
    <property type="project" value="UniProtKB-KW"/>
</dbReference>
<dbReference type="GO" id="GO:0006123">
    <property type="term" value="P:mitochondrial electron transport, cytochrome c to oxygen"/>
    <property type="evidence" value="ECO:0007669"/>
    <property type="project" value="TreeGrafter"/>
</dbReference>
<dbReference type="FunFam" id="4.10.95.10:FF:000001">
    <property type="entry name" value="Cytochrome c oxidase subunit 6A, mitochondrial"/>
    <property type="match status" value="1"/>
</dbReference>
<dbReference type="Gene3D" id="4.10.95.10">
    <property type="entry name" value="Cytochrome c oxidase, subunit VIa"/>
    <property type="match status" value="1"/>
</dbReference>
<dbReference type="InterPro" id="IPR001349">
    <property type="entry name" value="Cyt_c_oxidase_su6a"/>
</dbReference>
<dbReference type="InterPro" id="IPR018507">
    <property type="entry name" value="Cyt_c_oxidase_su6a_CS"/>
</dbReference>
<dbReference type="InterPro" id="IPR036418">
    <property type="entry name" value="Cyt_c_oxidase_su6a_sf"/>
</dbReference>
<dbReference type="PANTHER" id="PTHR11504">
    <property type="entry name" value="CYTOCHROME C OXIDASE POLYPEPTIDE VIA"/>
    <property type="match status" value="1"/>
</dbReference>
<dbReference type="PANTHER" id="PTHR11504:SF1">
    <property type="entry name" value="CYTOCHROME C OXIDASE SUBUNIT 6A2, MITOCHONDRIAL"/>
    <property type="match status" value="1"/>
</dbReference>
<dbReference type="Pfam" id="PF02046">
    <property type="entry name" value="COX6A"/>
    <property type="match status" value="1"/>
</dbReference>
<dbReference type="PIRSF" id="PIRSF000277">
    <property type="entry name" value="COX6A1"/>
    <property type="match status" value="1"/>
</dbReference>
<dbReference type="SUPFAM" id="SSF81411">
    <property type="entry name" value="Mitochondrial cytochrome c oxidase subunit VIa"/>
    <property type="match status" value="1"/>
</dbReference>
<dbReference type="PROSITE" id="PS01329">
    <property type="entry name" value="COX6A"/>
    <property type="match status" value="1"/>
</dbReference>
<accession>Q5RC38</accession>
<evidence type="ECO:0000250" key="1">
    <source>
        <dbReference type="UniProtKB" id="P07471"/>
    </source>
</evidence>
<evidence type="ECO:0000250" key="2">
    <source>
        <dbReference type="UniProtKB" id="P32799"/>
    </source>
</evidence>
<evidence type="ECO:0000250" key="3">
    <source>
        <dbReference type="UniProtKB" id="P43023"/>
    </source>
</evidence>
<evidence type="ECO:0000305" key="4"/>
<sequence length="97" mass="10829">MALPLRPLTRGLASAAKGGHGGAGARTWRLLTFVLALPSVALCTFNSYLHSGHRPRPEFRPYQHLRIRTKPYPWGDGNHTLFHNTHVNPLPTGYEHP</sequence>
<gene>
    <name type="primary">COX6A2</name>
</gene>
<feature type="transit peptide" description="Mitochondrion" evidence="1">
    <location>
        <begin position="1"/>
        <end position="12"/>
    </location>
</feature>
<feature type="chain" id="PRO_0000042051" description="Cytochrome c oxidase subunit 6A2, mitochondrial">
    <location>
        <begin position="13"/>
        <end position="97"/>
    </location>
</feature>
<feature type="topological domain" description="Mitochondrial matrix" evidence="1">
    <location>
        <begin position="13"/>
        <end position="24"/>
    </location>
</feature>
<feature type="transmembrane region" description="Helical" evidence="1">
    <location>
        <begin position="25"/>
        <end position="49"/>
    </location>
</feature>
<feature type="topological domain" description="Mitochondrial intermembrane" evidence="1">
    <location>
        <begin position="50"/>
        <end position="97"/>
    </location>
</feature>
<keyword id="KW-0472">Membrane</keyword>
<keyword id="KW-0496">Mitochondrion</keyword>
<keyword id="KW-0999">Mitochondrion inner membrane</keyword>
<keyword id="KW-0560">Oxidoreductase</keyword>
<keyword id="KW-1185">Reference proteome</keyword>
<keyword id="KW-0809">Transit peptide</keyword>
<keyword id="KW-0812">Transmembrane</keyword>
<keyword id="KW-1133">Transmembrane helix</keyword>
<name>CX6A2_PONAB</name>
<proteinExistence type="inferred from homology"/>
<comment type="function">
    <text evidence="2 3">Component of the cytochrome c oxidase, the last enzyme in the mitochondrial electron transport chain which drives oxidative phosphorylation. The respiratory chain contains 3 multisubunit complexes succinate dehydrogenase (complex II, CII), ubiquinol-cytochrome c oxidoreductase (cytochrome b-c1 complex, complex III, CIII) and cytochrome c oxidase (complex IV, CIV), that cooperate to transfer electrons derived from NADH and succinate to molecular oxygen, creating an electrochemical gradient over the inner membrane that drives transmembrane transport and the ATP synthase. Cytochrome c oxidase is the component of the respiratory chain that catalyzes the reduction of oxygen to water. Electrons originating from reduced cytochrome c in the intermembrane space (IMS) are transferred via the dinuclear copper A center (CU(A)) of subunit 2 and heme A of subunit 1 to the active site in subunit 1, a binuclear center (BNC) formed by heme A3 and copper B (CU(B)). The BNC reduces molecular oxygen to 2 water molecules unsing 4 electrons from cytochrome c in the IMS and 4 protons from the mitochondrial matrix. Plays a role in the assembly and stabilization of complex IV (By similarity).</text>
</comment>
<comment type="pathway">
    <text evidence="2">Energy metabolism; oxidative phosphorylation.</text>
</comment>
<comment type="subunit">
    <text evidence="1">Component of the cytochrome c oxidase (complex IV, CIV), a multisubunit enzyme composed of 14 subunits. The complex is composed of a catalytic core of 3 subunits MT-CO1, MT-CO2 and MT-CO3, encoded in the mitochondrial DNA, and 11 supernumerary subunits COX4I, COX5A, COX5B, COX6A, COX6B, COX6C, COX7A, COX7B, COX7C, COX8 and NDUFA4, which are encoded in the nuclear genome. The complex exists as a monomer or a dimer and forms supercomplexes (SCs) in the inner mitochondrial membrane with NADH-ubiquinone oxidoreductase (complex I, CI) and ubiquinol-cytochrome c oxidoreductase (cytochrome b-c1 complex, complex III, CIII), resulting in different assemblies (supercomplex SCI(1)III(2)IV(1) and megacomplex MCI(2)III(2)IV(2)).</text>
</comment>
<comment type="subcellular location">
    <subcellularLocation>
        <location evidence="1">Mitochondrion inner membrane</location>
        <topology evidence="1">Single-pass membrane protein</topology>
    </subcellularLocation>
</comment>
<comment type="similarity">
    <text evidence="4">Belongs to the cytochrome c oxidase subunit 6A family.</text>
</comment>
<organism>
    <name type="scientific">Pongo abelii</name>
    <name type="common">Sumatran orangutan</name>
    <name type="synonym">Pongo pygmaeus abelii</name>
    <dbReference type="NCBI Taxonomy" id="9601"/>
    <lineage>
        <taxon>Eukaryota</taxon>
        <taxon>Metazoa</taxon>
        <taxon>Chordata</taxon>
        <taxon>Craniata</taxon>
        <taxon>Vertebrata</taxon>
        <taxon>Euteleostomi</taxon>
        <taxon>Mammalia</taxon>
        <taxon>Eutheria</taxon>
        <taxon>Euarchontoglires</taxon>
        <taxon>Primates</taxon>
        <taxon>Haplorrhini</taxon>
        <taxon>Catarrhini</taxon>
        <taxon>Hominidae</taxon>
        <taxon>Pongo</taxon>
    </lineage>
</organism>
<protein>
    <recommendedName>
        <fullName>Cytochrome c oxidase subunit 6A2, mitochondrial</fullName>
    </recommendedName>
    <alternativeName>
        <fullName>Cytochrome c oxidase polypeptide VIa-heart</fullName>
        <shortName>COXVIAH</shortName>
    </alternativeName>
</protein>